<accession>Q65HB9</accession>
<accession>Q62SS4</accession>
<comment type="function">
    <text evidence="1">Part of the ABC transporter complex PstSACB involved in phosphate import. Responsible for energy coupling to the transport system.</text>
</comment>
<comment type="catalytic activity">
    <reaction evidence="1">
        <text>phosphate(out) + ATP + H2O = ADP + 2 phosphate(in) + H(+)</text>
        <dbReference type="Rhea" id="RHEA:24440"/>
        <dbReference type="ChEBI" id="CHEBI:15377"/>
        <dbReference type="ChEBI" id="CHEBI:15378"/>
        <dbReference type="ChEBI" id="CHEBI:30616"/>
        <dbReference type="ChEBI" id="CHEBI:43474"/>
        <dbReference type="ChEBI" id="CHEBI:456216"/>
        <dbReference type="EC" id="7.3.2.1"/>
    </reaction>
</comment>
<comment type="subunit">
    <text evidence="1">The complex is composed of two ATP-binding proteins (PstB), two transmembrane proteins (PstC and PstA) and a solute-binding protein (PstS).</text>
</comment>
<comment type="subcellular location">
    <subcellularLocation>
        <location evidence="1">Cell membrane</location>
        <topology evidence="1">Peripheral membrane protein</topology>
    </subcellularLocation>
</comment>
<comment type="similarity">
    <text evidence="1">Belongs to the ABC transporter superfamily. Phosphate importer (TC 3.A.1.7) family.</text>
</comment>
<proteinExistence type="inferred from homology"/>
<organism>
    <name type="scientific">Bacillus licheniformis (strain ATCC 14580 / DSM 13 / JCM 2505 / CCUG 7422 / NBRC 12200 / NCIMB 9375 / NCTC 10341 / NRRL NRS-1264 / Gibson 46)</name>
    <dbReference type="NCBI Taxonomy" id="279010"/>
    <lineage>
        <taxon>Bacteria</taxon>
        <taxon>Bacillati</taxon>
        <taxon>Bacillota</taxon>
        <taxon>Bacilli</taxon>
        <taxon>Bacillales</taxon>
        <taxon>Bacillaceae</taxon>
        <taxon>Bacillus</taxon>
    </lineage>
</organism>
<feature type="chain" id="PRO_0000092779" description="Phosphate import ATP-binding protein PstB 2">
    <location>
        <begin position="1"/>
        <end position="275"/>
    </location>
</feature>
<feature type="domain" description="ABC transporter" evidence="1">
    <location>
        <begin position="29"/>
        <end position="270"/>
    </location>
</feature>
<feature type="binding site" evidence="1">
    <location>
        <begin position="61"/>
        <end position="68"/>
    </location>
    <ligand>
        <name>ATP</name>
        <dbReference type="ChEBI" id="CHEBI:30616"/>
    </ligand>
</feature>
<name>PSTB2_BACLD</name>
<gene>
    <name evidence="1" type="primary">pstB2</name>
    <name type="synonym">pstBA</name>
    <name type="ordered locus">BLi02673</name>
    <name type="ordered locus">BL03714</name>
</gene>
<reference key="1">
    <citation type="journal article" date="2004" name="J. Mol. Microbiol. Biotechnol.">
        <title>The complete genome sequence of Bacillus licheniformis DSM13, an organism with great industrial potential.</title>
        <authorList>
            <person name="Veith B."/>
            <person name="Herzberg C."/>
            <person name="Steckel S."/>
            <person name="Feesche J."/>
            <person name="Maurer K.H."/>
            <person name="Ehrenreich P."/>
            <person name="Baeumer S."/>
            <person name="Henne A."/>
            <person name="Liesegang H."/>
            <person name="Merkl R."/>
            <person name="Ehrenreich A."/>
            <person name="Gottschalk G."/>
        </authorList>
    </citation>
    <scope>NUCLEOTIDE SEQUENCE [LARGE SCALE GENOMIC DNA]</scope>
    <source>
        <strain>ATCC 14580 / DSM 13 / JCM 2505 / CCUG 7422 / NBRC 12200 / NCIMB 9375 / NCTC 10341 / NRRL NRS-1264 / Gibson 46</strain>
    </source>
</reference>
<reference key="2">
    <citation type="journal article" date="2004" name="Genome Biol.">
        <title>Complete genome sequence of the industrial bacterium Bacillus licheniformis and comparisons with closely related Bacillus species.</title>
        <authorList>
            <person name="Rey M.W."/>
            <person name="Ramaiya P."/>
            <person name="Nelson B.A."/>
            <person name="Brody-Karpin S.D."/>
            <person name="Zaretsky E.J."/>
            <person name="Tang M."/>
            <person name="Lopez de Leon A."/>
            <person name="Xiang H."/>
            <person name="Gusti V."/>
            <person name="Clausen I.G."/>
            <person name="Olsen P.B."/>
            <person name="Rasmussen M.D."/>
            <person name="Andersen J.T."/>
            <person name="Joergensen P.L."/>
            <person name="Larsen T.S."/>
            <person name="Sorokin A."/>
            <person name="Bolotin A."/>
            <person name="Lapidus A."/>
            <person name="Galleron N."/>
            <person name="Ehrlich S.D."/>
            <person name="Berka R.M."/>
        </authorList>
    </citation>
    <scope>NUCLEOTIDE SEQUENCE [LARGE SCALE GENOMIC DNA]</scope>
    <source>
        <strain>ATCC 14580 / DSM 13 / JCM 2505 / CCUG 7422 / NBRC 12200 / NCIMB 9375 / NCTC 10341 / NRRL NRS-1264 / Gibson 46</strain>
    </source>
</reference>
<protein>
    <recommendedName>
        <fullName evidence="1">Phosphate import ATP-binding protein PstB 2</fullName>
        <ecNumber evidence="1">7.3.2.1</ecNumber>
    </recommendedName>
    <alternativeName>
        <fullName evidence="1">ABC phosphate transporter 2</fullName>
    </alternativeName>
    <alternativeName>
        <fullName evidence="1">Phosphate-transporting ATPase 2</fullName>
    </alternativeName>
</protein>
<evidence type="ECO:0000255" key="1">
    <source>
        <dbReference type="HAMAP-Rule" id="MF_01702"/>
    </source>
</evidence>
<sequence>MAQVQMPVLETVRDNIGIAPFPEAKEHILEVKNLNIYYGEKRAVNDISMRIDKHAVTALIGPSGCGKSTFLRSINRMNDLIPSARTSGEIRYEGLNILDSNINVVNLRREIGMVFQKPNPFPKSIYSNITHALKYAGERRKSVLDEIVEESLTKAALWDEVKDRLHESALSLSGGQQQRLCIARTLAMKPEVLLLDEPASALDPISNAKIEELIVGLKEEYSIIIVTHNMQQASRISDQTAFFLNGDLIEYDRTEKIFMNPSEKKTEDYINGRFG</sequence>
<dbReference type="EC" id="7.3.2.1" evidence="1"/>
<dbReference type="EMBL" id="AE017333">
    <property type="protein sequence ID" value="AAU41545.1"/>
    <property type="molecule type" value="Genomic_DNA"/>
</dbReference>
<dbReference type="EMBL" id="CP000002">
    <property type="protein sequence ID" value="AAU24185.1"/>
    <property type="molecule type" value="Genomic_DNA"/>
</dbReference>
<dbReference type="SMR" id="Q65HB9"/>
<dbReference type="STRING" id="279010.BL03714"/>
<dbReference type="KEGG" id="bld:BLi02673"/>
<dbReference type="KEGG" id="bli:BL03714"/>
<dbReference type="eggNOG" id="COG1117">
    <property type="taxonomic scope" value="Bacteria"/>
</dbReference>
<dbReference type="HOGENOM" id="CLU_000604_1_22_9"/>
<dbReference type="Proteomes" id="UP000000606">
    <property type="component" value="Chromosome"/>
</dbReference>
<dbReference type="GO" id="GO:0005886">
    <property type="term" value="C:plasma membrane"/>
    <property type="evidence" value="ECO:0007669"/>
    <property type="project" value="UniProtKB-SubCell"/>
</dbReference>
<dbReference type="GO" id="GO:0005524">
    <property type="term" value="F:ATP binding"/>
    <property type="evidence" value="ECO:0007669"/>
    <property type="project" value="UniProtKB-KW"/>
</dbReference>
<dbReference type="GO" id="GO:0016887">
    <property type="term" value="F:ATP hydrolysis activity"/>
    <property type="evidence" value="ECO:0007669"/>
    <property type="project" value="InterPro"/>
</dbReference>
<dbReference type="GO" id="GO:0015415">
    <property type="term" value="F:ATPase-coupled phosphate ion transmembrane transporter activity"/>
    <property type="evidence" value="ECO:0007669"/>
    <property type="project" value="UniProtKB-EC"/>
</dbReference>
<dbReference type="GO" id="GO:0035435">
    <property type="term" value="P:phosphate ion transmembrane transport"/>
    <property type="evidence" value="ECO:0007669"/>
    <property type="project" value="InterPro"/>
</dbReference>
<dbReference type="CDD" id="cd03260">
    <property type="entry name" value="ABC_PstB_phosphate_transporter"/>
    <property type="match status" value="1"/>
</dbReference>
<dbReference type="Gene3D" id="3.40.50.300">
    <property type="entry name" value="P-loop containing nucleotide triphosphate hydrolases"/>
    <property type="match status" value="1"/>
</dbReference>
<dbReference type="InterPro" id="IPR003593">
    <property type="entry name" value="AAA+_ATPase"/>
</dbReference>
<dbReference type="InterPro" id="IPR003439">
    <property type="entry name" value="ABC_transporter-like_ATP-bd"/>
</dbReference>
<dbReference type="InterPro" id="IPR017871">
    <property type="entry name" value="ABC_transporter-like_CS"/>
</dbReference>
<dbReference type="InterPro" id="IPR027417">
    <property type="entry name" value="P-loop_NTPase"/>
</dbReference>
<dbReference type="InterPro" id="IPR005670">
    <property type="entry name" value="PstB-like"/>
</dbReference>
<dbReference type="NCBIfam" id="TIGR00972">
    <property type="entry name" value="3a0107s01c2"/>
    <property type="match status" value="1"/>
</dbReference>
<dbReference type="PANTHER" id="PTHR43423">
    <property type="entry name" value="ABC TRANSPORTER I FAMILY MEMBER 17"/>
    <property type="match status" value="1"/>
</dbReference>
<dbReference type="PANTHER" id="PTHR43423:SF1">
    <property type="entry name" value="ABC TRANSPORTER I FAMILY MEMBER 17"/>
    <property type="match status" value="1"/>
</dbReference>
<dbReference type="Pfam" id="PF00005">
    <property type="entry name" value="ABC_tran"/>
    <property type="match status" value="1"/>
</dbReference>
<dbReference type="SMART" id="SM00382">
    <property type="entry name" value="AAA"/>
    <property type="match status" value="1"/>
</dbReference>
<dbReference type="SUPFAM" id="SSF52540">
    <property type="entry name" value="P-loop containing nucleoside triphosphate hydrolases"/>
    <property type="match status" value="1"/>
</dbReference>
<dbReference type="PROSITE" id="PS00211">
    <property type="entry name" value="ABC_TRANSPORTER_1"/>
    <property type="match status" value="1"/>
</dbReference>
<dbReference type="PROSITE" id="PS50893">
    <property type="entry name" value="ABC_TRANSPORTER_2"/>
    <property type="match status" value="1"/>
</dbReference>
<dbReference type="PROSITE" id="PS51238">
    <property type="entry name" value="PSTB"/>
    <property type="match status" value="1"/>
</dbReference>
<keyword id="KW-0067">ATP-binding</keyword>
<keyword id="KW-1003">Cell membrane</keyword>
<keyword id="KW-0472">Membrane</keyword>
<keyword id="KW-0547">Nucleotide-binding</keyword>
<keyword id="KW-0592">Phosphate transport</keyword>
<keyword id="KW-1185">Reference proteome</keyword>
<keyword id="KW-1278">Translocase</keyword>
<keyword id="KW-0813">Transport</keyword>